<keyword id="KW-0131">Cell cycle</keyword>
<keyword id="KW-0132">Cell division</keyword>
<keyword id="KW-0159">Chromosome partition</keyword>
<keyword id="KW-0963">Cytoplasm</keyword>
<keyword id="KW-0229">DNA integration</keyword>
<keyword id="KW-0233">DNA recombination</keyword>
<keyword id="KW-0238">DNA-binding</keyword>
<evidence type="ECO:0000255" key="1">
    <source>
        <dbReference type="HAMAP-Rule" id="MF_01808"/>
    </source>
</evidence>
<evidence type="ECO:0000255" key="2">
    <source>
        <dbReference type="PROSITE-ProRule" id="PRU01246"/>
    </source>
</evidence>
<evidence type="ECO:0000255" key="3">
    <source>
        <dbReference type="PROSITE-ProRule" id="PRU01248"/>
    </source>
</evidence>
<gene>
    <name evidence="1" type="primary">xerC</name>
    <name type="ordered locus">RF_1295</name>
</gene>
<dbReference type="EMBL" id="CP000053">
    <property type="protein sequence ID" value="AAY62146.1"/>
    <property type="molecule type" value="Genomic_DNA"/>
</dbReference>
<dbReference type="SMR" id="Q4UJZ3"/>
<dbReference type="STRING" id="315456.RF_1295"/>
<dbReference type="KEGG" id="rfe:RF_1295"/>
<dbReference type="eggNOG" id="COG4974">
    <property type="taxonomic scope" value="Bacteria"/>
</dbReference>
<dbReference type="HOGENOM" id="CLU_027562_9_0_5"/>
<dbReference type="OrthoDB" id="9801717at2"/>
<dbReference type="Proteomes" id="UP000008548">
    <property type="component" value="Chromosome"/>
</dbReference>
<dbReference type="GO" id="GO:0005737">
    <property type="term" value="C:cytoplasm"/>
    <property type="evidence" value="ECO:0007669"/>
    <property type="project" value="UniProtKB-SubCell"/>
</dbReference>
<dbReference type="GO" id="GO:0003677">
    <property type="term" value="F:DNA binding"/>
    <property type="evidence" value="ECO:0007669"/>
    <property type="project" value="UniProtKB-KW"/>
</dbReference>
<dbReference type="GO" id="GO:0009037">
    <property type="term" value="F:tyrosine-based site-specific recombinase activity"/>
    <property type="evidence" value="ECO:0007669"/>
    <property type="project" value="UniProtKB-UniRule"/>
</dbReference>
<dbReference type="GO" id="GO:0051301">
    <property type="term" value="P:cell division"/>
    <property type="evidence" value="ECO:0007669"/>
    <property type="project" value="UniProtKB-KW"/>
</dbReference>
<dbReference type="GO" id="GO:0007059">
    <property type="term" value="P:chromosome segregation"/>
    <property type="evidence" value="ECO:0007669"/>
    <property type="project" value="UniProtKB-UniRule"/>
</dbReference>
<dbReference type="GO" id="GO:0006313">
    <property type="term" value="P:DNA transposition"/>
    <property type="evidence" value="ECO:0007669"/>
    <property type="project" value="UniProtKB-UniRule"/>
</dbReference>
<dbReference type="CDD" id="cd00798">
    <property type="entry name" value="INT_XerDC_C"/>
    <property type="match status" value="1"/>
</dbReference>
<dbReference type="Gene3D" id="1.10.150.130">
    <property type="match status" value="1"/>
</dbReference>
<dbReference type="Gene3D" id="1.10.443.10">
    <property type="entry name" value="Intergrase catalytic core"/>
    <property type="match status" value="1"/>
</dbReference>
<dbReference type="HAMAP" id="MF_01808">
    <property type="entry name" value="Recomb_XerC_XerD"/>
    <property type="match status" value="1"/>
</dbReference>
<dbReference type="InterPro" id="IPR044068">
    <property type="entry name" value="CB"/>
</dbReference>
<dbReference type="InterPro" id="IPR011010">
    <property type="entry name" value="DNA_brk_join_enz"/>
</dbReference>
<dbReference type="InterPro" id="IPR013762">
    <property type="entry name" value="Integrase-like_cat_sf"/>
</dbReference>
<dbReference type="InterPro" id="IPR002104">
    <property type="entry name" value="Integrase_catalytic"/>
</dbReference>
<dbReference type="InterPro" id="IPR010998">
    <property type="entry name" value="Integrase_recombinase_N"/>
</dbReference>
<dbReference type="InterPro" id="IPR004107">
    <property type="entry name" value="Integrase_SAM-like_N"/>
</dbReference>
<dbReference type="InterPro" id="IPR023009">
    <property type="entry name" value="Tyrosine_recombinase_XerC/XerD"/>
</dbReference>
<dbReference type="InterPro" id="IPR050090">
    <property type="entry name" value="Tyrosine_recombinase_XerCD"/>
</dbReference>
<dbReference type="PANTHER" id="PTHR30349">
    <property type="entry name" value="PHAGE INTEGRASE-RELATED"/>
    <property type="match status" value="1"/>
</dbReference>
<dbReference type="PANTHER" id="PTHR30349:SF90">
    <property type="entry name" value="TYROSINE RECOMBINASE XERD"/>
    <property type="match status" value="1"/>
</dbReference>
<dbReference type="Pfam" id="PF02899">
    <property type="entry name" value="Phage_int_SAM_1"/>
    <property type="match status" value="1"/>
</dbReference>
<dbReference type="Pfam" id="PF00589">
    <property type="entry name" value="Phage_integrase"/>
    <property type="match status" value="1"/>
</dbReference>
<dbReference type="SUPFAM" id="SSF56349">
    <property type="entry name" value="DNA breaking-rejoining enzymes"/>
    <property type="match status" value="1"/>
</dbReference>
<dbReference type="PROSITE" id="PS51900">
    <property type="entry name" value="CB"/>
    <property type="match status" value="1"/>
</dbReference>
<dbReference type="PROSITE" id="PS51898">
    <property type="entry name" value="TYR_RECOMBINASE"/>
    <property type="match status" value="1"/>
</dbReference>
<feature type="chain" id="PRO_0000272366" description="Tyrosine recombinase XerC">
    <location>
        <begin position="1"/>
        <end position="305"/>
    </location>
</feature>
<feature type="domain" description="Core-binding (CB)" evidence="3">
    <location>
        <begin position="4"/>
        <end position="95"/>
    </location>
</feature>
<feature type="domain" description="Tyr recombinase" evidence="2">
    <location>
        <begin position="116"/>
        <end position="298"/>
    </location>
</feature>
<feature type="active site" evidence="1">
    <location>
        <position position="159"/>
    </location>
</feature>
<feature type="active site" evidence="1">
    <location>
        <position position="182"/>
    </location>
</feature>
<feature type="active site" evidence="1">
    <location>
        <position position="250"/>
    </location>
</feature>
<feature type="active site" evidence="1">
    <location>
        <position position="253"/>
    </location>
</feature>
<feature type="active site" evidence="1">
    <location>
        <position position="276"/>
    </location>
</feature>
<feature type="active site" description="O-(3'-phospho-DNA)-tyrosine intermediate" evidence="1">
    <location>
        <position position="285"/>
    </location>
</feature>
<name>XERC_RICFE</name>
<reference key="1">
    <citation type="journal article" date="2005" name="PLoS Biol.">
        <title>The genome sequence of Rickettsia felis identifies the first putative conjugative plasmid in an obligate intracellular parasite.</title>
        <authorList>
            <person name="Ogata H."/>
            <person name="Renesto P."/>
            <person name="Audic S."/>
            <person name="Robert C."/>
            <person name="Blanc G."/>
            <person name="Fournier P.-E."/>
            <person name="Parinello H."/>
            <person name="Claverie J.-M."/>
            <person name="Raoult D."/>
        </authorList>
    </citation>
    <scope>NUCLEOTIDE SEQUENCE [LARGE SCALE GENOMIC DNA]</scope>
    <source>
        <strain>ATCC VR-1525 / URRWXCal2</strain>
    </source>
</reference>
<protein>
    <recommendedName>
        <fullName evidence="1">Tyrosine recombinase XerC</fullName>
    </recommendedName>
</protein>
<sequence length="305" mass="35486">MLDTSIQELIDKWQKYLDLQRNYSNHTVISYNNDLKHFLEFMNYYNSELVTINHIKTADIRLIRSWLAKRNCDNFTTSSISRGLSAVKNFYRFLEKTTQLNSHIIFSIKSPKKTKLLPKALSEDDVVISLEHIEEYGNVKWVELRNKALLVLIYASGLRISEALSITKLHLQNLEFIRIIGKGSKERIIPWLPIAKNLITQYLEILPYKLGDNEPIFRGKQGKKLQPPVFNRELIKLKHFYGLPQHLTAHSFRHSFASHLLEHGADLRSIQELLGHKSLSTTQNYTKTSIKHLEAVYTTAYPIKK</sequence>
<proteinExistence type="inferred from homology"/>
<comment type="function">
    <text evidence="1">Site-specific tyrosine recombinase, which acts by catalyzing the cutting and rejoining of the recombining DNA molecules. The XerC-XerD complex is essential to convert dimers of the bacterial chromosome into monomers to permit their segregation at cell division. It also contributes to the segregational stability of plasmids.</text>
</comment>
<comment type="subunit">
    <text evidence="1">Forms a cyclic heterotetrameric complex composed of two molecules of XerC and two molecules of XerD.</text>
</comment>
<comment type="subcellular location">
    <subcellularLocation>
        <location evidence="1">Cytoplasm</location>
    </subcellularLocation>
</comment>
<comment type="similarity">
    <text evidence="1">Belongs to the 'phage' integrase family. XerC subfamily.</text>
</comment>
<accession>Q4UJZ3</accession>
<organism>
    <name type="scientific">Rickettsia felis (strain ATCC VR-1525 / URRWXCal2)</name>
    <name type="common">Rickettsia azadi</name>
    <dbReference type="NCBI Taxonomy" id="315456"/>
    <lineage>
        <taxon>Bacteria</taxon>
        <taxon>Pseudomonadati</taxon>
        <taxon>Pseudomonadota</taxon>
        <taxon>Alphaproteobacteria</taxon>
        <taxon>Rickettsiales</taxon>
        <taxon>Rickettsiaceae</taxon>
        <taxon>Rickettsieae</taxon>
        <taxon>Rickettsia</taxon>
        <taxon>spotted fever group</taxon>
    </lineage>
</organism>